<reference evidence="7 8" key="1">
    <citation type="journal article" date="2002" name="FEBS Lett.">
        <title>Retardation of the G2-M phase progression on gene disruption of RNA binding protein Sam68 in the DT40 cell line.</title>
        <authorList>
            <person name="Li Q.H."/>
            <person name="Haga I."/>
            <person name="Shimizu T."/>
            <person name="Itoh M."/>
            <person name="Kurosaki T."/>
            <person name="Fujisawa J."/>
        </authorList>
    </citation>
    <scope>NUCLEOTIDE SEQUENCE [MRNA]</scope>
    <scope>FUNCTION</scope>
    <source>
        <tissue evidence="6">B-cell</tissue>
    </source>
</reference>
<evidence type="ECO:0000250" key="1"/>
<evidence type="ECO:0000250" key="2">
    <source>
        <dbReference type="UniProtKB" id="Q07666"/>
    </source>
</evidence>
<evidence type="ECO:0000250" key="3">
    <source>
        <dbReference type="UniProtKB" id="Q60749"/>
    </source>
</evidence>
<evidence type="ECO:0000255" key="4">
    <source>
        <dbReference type="PROSITE-ProRule" id="PRU00117"/>
    </source>
</evidence>
<evidence type="ECO:0000256" key="5">
    <source>
        <dbReference type="SAM" id="MobiDB-lite"/>
    </source>
</evidence>
<evidence type="ECO:0000269" key="6">
    <source>
    </source>
</evidence>
<evidence type="ECO:0000305" key="7"/>
<evidence type="ECO:0000312" key="8">
    <source>
        <dbReference type="EMBL" id="AAL30071.1"/>
    </source>
</evidence>
<feature type="chain" id="PRO_0000050127" description="KH domain-containing, RNA-binding, signal transduction-associated protein 1">
    <location>
        <begin position="1"/>
        <end position="433"/>
    </location>
</feature>
<feature type="domain" description="KH" evidence="4">
    <location>
        <begin position="171"/>
        <end position="197"/>
    </location>
</feature>
<feature type="region of interest" description="Disordered" evidence="5">
    <location>
        <begin position="1"/>
        <end position="79"/>
    </location>
</feature>
<feature type="region of interest" description="Involved in homodimerization" evidence="2">
    <location>
        <begin position="82"/>
        <end position="243"/>
    </location>
</feature>
<feature type="region of interest" description="Disordered" evidence="5">
    <location>
        <begin position="259"/>
        <end position="305"/>
    </location>
</feature>
<feature type="region of interest" description="Disordered" evidence="5">
    <location>
        <begin position="317"/>
        <end position="351"/>
    </location>
</feature>
<feature type="region of interest" description="Disordered" evidence="5">
    <location>
        <begin position="403"/>
        <end position="433"/>
    </location>
</feature>
<feature type="compositionally biased region" description="Low complexity" evidence="5">
    <location>
        <begin position="41"/>
        <end position="76"/>
    </location>
</feature>
<feature type="compositionally biased region" description="Pro residues" evidence="5">
    <location>
        <begin position="277"/>
        <end position="300"/>
    </location>
</feature>
<feature type="compositionally biased region" description="Low complexity" evidence="5">
    <location>
        <begin position="329"/>
        <end position="342"/>
    </location>
</feature>
<feature type="compositionally biased region" description="Basic and acidic residues" evidence="5">
    <location>
        <begin position="424"/>
        <end position="433"/>
    </location>
</feature>
<name>KHDR1_CHICK</name>
<organism>
    <name type="scientific">Gallus gallus</name>
    <name type="common">Chicken</name>
    <dbReference type="NCBI Taxonomy" id="9031"/>
    <lineage>
        <taxon>Eukaryota</taxon>
        <taxon>Metazoa</taxon>
        <taxon>Chordata</taxon>
        <taxon>Craniata</taxon>
        <taxon>Vertebrata</taxon>
        <taxon>Euteleostomi</taxon>
        <taxon>Archelosauria</taxon>
        <taxon>Archosauria</taxon>
        <taxon>Dinosauria</taxon>
        <taxon>Saurischia</taxon>
        <taxon>Theropoda</taxon>
        <taxon>Coelurosauria</taxon>
        <taxon>Aves</taxon>
        <taxon>Neognathae</taxon>
        <taxon>Galloanserae</taxon>
        <taxon>Galliformes</taxon>
        <taxon>Phasianidae</taxon>
        <taxon>Phasianinae</taxon>
        <taxon>Gallus</taxon>
    </lineage>
</organism>
<sequence>MQRRDDSSARMGRGPGGPGSARQGGPNPRRSPRGGGGRGAGAQHPQPLLTGGAAAGSSGAQGPAAANPAPLLPGGAVKMEPENKYLPELMAEKDSLDPSSTHAMQLLSAEIEKIQKGETTKKDEEENYLDLFSHKNMKLKERVLIPVKQYPKFNFVGKILGPQGNTIKRLQEETGAKISVLGKGSMRDKAKEEELRKGGDPKYAHLNMDLHVFIEVFGPPCEAYALMAHAMEEVKKFLVPDMMDDICQEQFLELSYLNGVPEPTRGRGGPVRGRGAAPPPPPPVPRGRGVGPPPPPPPPRGALVRGAPVRGAIARGAAVARGVPPPPAVRGAPAPRARAAGIQRIPLPPPPAPETYEEYGYDDAYADQSYEGYEGYYSQGQGDTEYYDYGHGEAQETYEAYGQDDWNGTRPSLKAPPARPVKGAYREHPYGRY</sequence>
<protein>
    <recommendedName>
        <fullName>KH domain-containing, RNA-binding, signal transduction-associated protein 1</fullName>
    </recommendedName>
    <alternativeName>
        <fullName>Src-associated in mitosis 68 kDa protein</fullName>
        <shortName>Sam68</shortName>
    </alternativeName>
</protein>
<keyword id="KW-0007">Acetylation</keyword>
<keyword id="KW-0131">Cell cycle</keyword>
<keyword id="KW-0963">Cytoplasm</keyword>
<keyword id="KW-0472">Membrane</keyword>
<keyword id="KW-0488">Methylation</keyword>
<keyword id="KW-0507">mRNA processing</keyword>
<keyword id="KW-0508">mRNA splicing</keyword>
<keyword id="KW-0539">Nucleus</keyword>
<keyword id="KW-0597">Phosphoprotein</keyword>
<keyword id="KW-1185">Reference proteome</keyword>
<keyword id="KW-0694">RNA-binding</keyword>
<keyword id="KW-0729">SH3-binding</keyword>
<keyword id="KW-0804">Transcription</keyword>
<keyword id="KW-0805">Transcription regulation</keyword>
<comment type="function">
    <text evidence="2 3 6">Recruited and tyrosine phosphorylated by several receptor systems, for example the T-cell, leptin and insulin receptors. Once phosphorylated, functions as an adapter protein in signal transduction cascades by binding to SH2 and SH3 domain-containing proteins. Role in G2-M progression in the cell cycle. Represses CBP-dependent transcriptional activation apparently by competing with other nuclear factors for binding to CBP. Also acts as a putative regulator of mRNA stability and/or translation rates and mediates mRNA nuclear export. Plays a role in the regulation of alternative splicing and influences mRNA splice site selection and exon inclusion.</text>
</comment>
<comment type="subunit">
    <text evidence="1">Self-associates to form homooligomers when bound to RNA, oligomerization appears to be limited when binding to proteins.</text>
</comment>
<comment type="subcellular location">
    <subcellularLocation>
        <location evidence="2">Nucleus</location>
    </subcellularLocation>
    <subcellularLocation>
        <location evidence="2">Cytoplasm</location>
    </subcellularLocation>
    <subcellularLocation>
        <location evidence="2">Membrane</location>
    </subcellularLocation>
    <text evidence="2">Predominantly located in the nucleus but also located partially in the cytoplasm.</text>
</comment>
<comment type="domain">
    <text evidence="3">The KH domain is required for binding to RNA.</text>
</comment>
<comment type="PTM">
    <text evidence="2">Tyrosine phosphorylated by several non-receptor tyrosine kinases including LCK, FYN and JAK3.</text>
</comment>
<comment type="PTM">
    <text evidence="2">Acetylated. Positively correlates with ability to bind RNA (By similarity).</text>
</comment>
<comment type="PTM">
    <text evidence="2">Methylated by HRMT1L2. Required for nuclear localization (By similarity).</text>
</comment>
<comment type="similarity">
    <text evidence="7">Belongs to the KHDRBS family.</text>
</comment>
<gene>
    <name evidence="2" type="primary">KHDRBS1</name>
    <name evidence="8" type="synonym">SAM68</name>
</gene>
<accession>Q8UUW7</accession>
<dbReference type="EMBL" id="AY057837">
    <property type="protein sequence ID" value="AAL30071.1"/>
    <property type="molecule type" value="mRNA"/>
</dbReference>
<dbReference type="RefSeq" id="NP_989561.1">
    <property type="nucleotide sequence ID" value="NM_204230.1"/>
</dbReference>
<dbReference type="SMR" id="Q8UUW7"/>
<dbReference type="FunCoup" id="Q8UUW7">
    <property type="interactions" value="3063"/>
</dbReference>
<dbReference type="STRING" id="9031.ENSGALP00000053054"/>
<dbReference type="PaxDb" id="9031-ENSGALP00000005166"/>
<dbReference type="GeneID" id="374071"/>
<dbReference type="KEGG" id="gga:374071"/>
<dbReference type="CTD" id="10657"/>
<dbReference type="VEuPathDB" id="HostDB:geneid_374071"/>
<dbReference type="eggNOG" id="KOG1588">
    <property type="taxonomic scope" value="Eukaryota"/>
</dbReference>
<dbReference type="InParanoid" id="Q8UUW7"/>
<dbReference type="OrthoDB" id="6777263at2759"/>
<dbReference type="PhylomeDB" id="Q8UUW7"/>
<dbReference type="PRO" id="PR:Q8UUW7"/>
<dbReference type="Proteomes" id="UP000000539">
    <property type="component" value="Unassembled WGS sequence"/>
</dbReference>
<dbReference type="GO" id="GO:0005737">
    <property type="term" value="C:cytoplasm"/>
    <property type="evidence" value="ECO:0000250"/>
    <property type="project" value="UniProtKB"/>
</dbReference>
<dbReference type="GO" id="GO:0016020">
    <property type="term" value="C:membrane"/>
    <property type="evidence" value="ECO:0000250"/>
    <property type="project" value="UniProtKB"/>
</dbReference>
<dbReference type="GO" id="GO:0005634">
    <property type="term" value="C:nucleus"/>
    <property type="evidence" value="ECO:0000250"/>
    <property type="project" value="UniProtKB"/>
</dbReference>
<dbReference type="GO" id="GO:0003729">
    <property type="term" value="F:mRNA binding"/>
    <property type="evidence" value="ECO:0000318"/>
    <property type="project" value="GO_Central"/>
</dbReference>
<dbReference type="GO" id="GO:0008143">
    <property type="term" value="F:poly(A) binding"/>
    <property type="evidence" value="ECO:0000318"/>
    <property type="project" value="GO_Central"/>
</dbReference>
<dbReference type="GO" id="GO:1990782">
    <property type="term" value="F:protein tyrosine kinase binding"/>
    <property type="evidence" value="ECO:0000250"/>
    <property type="project" value="UniProtKB"/>
</dbReference>
<dbReference type="GO" id="GO:0003723">
    <property type="term" value="F:RNA binding"/>
    <property type="evidence" value="ECO:0000250"/>
    <property type="project" value="UniProtKB"/>
</dbReference>
<dbReference type="GO" id="GO:0017124">
    <property type="term" value="F:SH3 domain binding"/>
    <property type="evidence" value="ECO:0007669"/>
    <property type="project" value="UniProtKB-KW"/>
</dbReference>
<dbReference type="GO" id="GO:0000086">
    <property type="term" value="P:G2/M transition of mitotic cell cycle"/>
    <property type="evidence" value="ECO:0000314"/>
    <property type="project" value="UniProtKB"/>
</dbReference>
<dbReference type="GO" id="GO:0006397">
    <property type="term" value="P:mRNA processing"/>
    <property type="evidence" value="ECO:0007669"/>
    <property type="project" value="UniProtKB-KW"/>
</dbReference>
<dbReference type="GO" id="GO:0045892">
    <property type="term" value="P:negative regulation of DNA-templated transcription"/>
    <property type="evidence" value="ECO:0000250"/>
    <property type="project" value="UniProtKB"/>
</dbReference>
<dbReference type="GO" id="GO:0046833">
    <property type="term" value="P:positive regulation of RNA export from nucleus"/>
    <property type="evidence" value="ECO:0000250"/>
    <property type="project" value="UniProtKB"/>
</dbReference>
<dbReference type="GO" id="GO:0045948">
    <property type="term" value="P:positive regulation of translational initiation"/>
    <property type="evidence" value="ECO:0000250"/>
    <property type="project" value="UniProtKB"/>
</dbReference>
<dbReference type="GO" id="GO:0000381">
    <property type="term" value="P:regulation of alternative mRNA splicing, via spliceosome"/>
    <property type="evidence" value="ECO:0000250"/>
    <property type="project" value="UniProtKB"/>
</dbReference>
<dbReference type="GO" id="GO:0046831">
    <property type="term" value="P:regulation of RNA export from nucleus"/>
    <property type="evidence" value="ECO:0000250"/>
    <property type="project" value="UniProtKB"/>
</dbReference>
<dbReference type="GO" id="GO:0008380">
    <property type="term" value="P:RNA splicing"/>
    <property type="evidence" value="ECO:0007669"/>
    <property type="project" value="UniProtKB-KW"/>
</dbReference>
<dbReference type="GO" id="GO:0050852">
    <property type="term" value="P:T cell receptor signaling pathway"/>
    <property type="evidence" value="ECO:0000250"/>
    <property type="project" value="UniProtKB"/>
</dbReference>
<dbReference type="CDD" id="cd22468">
    <property type="entry name" value="KH-I_KHDRBS1"/>
    <property type="match status" value="1"/>
</dbReference>
<dbReference type="FunFam" id="3.30.1370.10:FF:000036">
    <property type="entry name" value="KH RNA binding domain containing, signal transduction associated 1"/>
    <property type="match status" value="1"/>
</dbReference>
<dbReference type="Gene3D" id="3.30.1370.10">
    <property type="entry name" value="K Homology domain, type 1"/>
    <property type="match status" value="1"/>
</dbReference>
<dbReference type="InterPro" id="IPR045071">
    <property type="entry name" value="BBP-like"/>
</dbReference>
<dbReference type="InterPro" id="IPR055256">
    <property type="entry name" value="KH_1_KHDC4/BBP-like"/>
</dbReference>
<dbReference type="InterPro" id="IPR004087">
    <property type="entry name" value="KH_dom"/>
</dbReference>
<dbReference type="InterPro" id="IPR036612">
    <property type="entry name" value="KH_dom_type_1_sf"/>
</dbReference>
<dbReference type="InterPro" id="IPR032571">
    <property type="entry name" value="Qua1_dom"/>
</dbReference>
<dbReference type="InterPro" id="IPR032335">
    <property type="entry name" value="Sam68-YY"/>
</dbReference>
<dbReference type="PANTHER" id="PTHR11208:SF30">
    <property type="entry name" value="KH DOMAIN-CONTAINING, RNA-BINDING, SIGNAL TRANSDUCTION-ASSOCIATED PROTEIN 1"/>
    <property type="match status" value="1"/>
</dbReference>
<dbReference type="PANTHER" id="PTHR11208">
    <property type="entry name" value="RNA-BINDING PROTEIN RELATED"/>
    <property type="match status" value="1"/>
</dbReference>
<dbReference type="Pfam" id="PF22675">
    <property type="entry name" value="KH-I_KHDC4-BBP"/>
    <property type="match status" value="1"/>
</dbReference>
<dbReference type="Pfam" id="PF16274">
    <property type="entry name" value="Qua1"/>
    <property type="match status" value="1"/>
</dbReference>
<dbReference type="Pfam" id="PF16568">
    <property type="entry name" value="Sam68-YY"/>
    <property type="match status" value="1"/>
</dbReference>
<dbReference type="SMART" id="SM00322">
    <property type="entry name" value="KH"/>
    <property type="match status" value="1"/>
</dbReference>
<dbReference type="SUPFAM" id="SSF54791">
    <property type="entry name" value="Eukaryotic type KH-domain (KH-domain type I)"/>
    <property type="match status" value="1"/>
</dbReference>
<dbReference type="PROSITE" id="PS50084">
    <property type="entry name" value="KH_TYPE_1"/>
    <property type="match status" value="1"/>
</dbReference>
<proteinExistence type="evidence at transcript level"/>